<sequence length="610" mass="63124">MDTEDLPANNAPLTVNEQLLGSCTLKFPAQDAQVIVMSGQETIRVLEVEVDTALSSAGAAESGGDEEGSGQSLEATEEAQLDGPVTTSSTTAVTVEVSAPVVQTVVSKAAISVSPAQQTSVPITVQACPQVLTQDGLASLMTGMLAQQSSLGQPLLIPLSMAGSVGGQGGLAVLTLPTATVATLPGLAAASPAGGLLKLPFAGLQAATVLNSVQTQLQAPAQAVLQPQMSALQAMQQTQTTAATTASIVQKASEPSVSVATLQTAGLSINPAIISAASLGAQPQFISSLTTTPIITSAMSNVAGLTSQLITNAQGQVIGTLPLLVNPASLAGAAAASALPAQGLQVQTVAPQLLLNSQGQIIATIGNGPTAAIPSTASVLPKATVPLTLTKTTTQGPVGKVAPSKVIIAPQPSVVKPVTSLTAAGVIACGEMPTVGQLVNKPSAVKDEEAINLEEIREFAKNFKIRRLSLGLTQTQVGQALTATEGPAYSQSAICRFEKLDITPKSAQKLKPVLERWLAEAELWNQKGQQNLMEFVGGEPSKKRKRRTSFTPQAIEVLNTYFEKNSLPTGQEITEIAKELNYDREVVRVWFCNRRQTLKNTSKINVFQSQ</sequence>
<keyword id="KW-0238">DNA-binding</keyword>
<keyword id="KW-0371">Homeobox</keyword>
<keyword id="KW-0539">Nucleus</keyword>
<keyword id="KW-1185">Reference proteome</keyword>
<keyword id="KW-0804">Transcription</keyword>
<keyword id="KW-0805">Transcription regulation</keyword>
<protein>
    <recommendedName>
        <fullName>POU domain, class 6, transcription factor 1</fullName>
    </recommendedName>
    <alternativeName>
        <fullName>POU domain protein C</fullName>
        <shortName>POU[C]</shortName>
        <shortName>ZfPOU[C]</shortName>
    </alternativeName>
</protein>
<evidence type="ECO:0000255" key="1">
    <source>
        <dbReference type="PROSITE-ProRule" id="PRU00108"/>
    </source>
</evidence>
<evidence type="ECO:0000255" key="2">
    <source>
        <dbReference type="PROSITE-ProRule" id="PRU00530"/>
    </source>
</evidence>
<evidence type="ECO:0000256" key="3">
    <source>
        <dbReference type="SAM" id="MobiDB-lite"/>
    </source>
</evidence>
<evidence type="ECO:0000269" key="4">
    <source>
    </source>
</evidence>
<evidence type="ECO:0000305" key="5"/>
<accession>P31367</accession>
<accession>B3DFR1</accession>
<feature type="chain" id="PRO_0000100770" description="POU domain, class 6, transcription factor 1">
    <location>
        <begin position="1"/>
        <end position="610"/>
    </location>
</feature>
<feature type="domain" description="POU-specific" evidence="2">
    <location>
        <begin position="448"/>
        <end position="522"/>
    </location>
</feature>
<feature type="DNA-binding region" description="Homeobox" evidence="1">
    <location>
        <begin position="543"/>
        <end position="602"/>
    </location>
</feature>
<feature type="region of interest" description="Disordered" evidence="3">
    <location>
        <begin position="55"/>
        <end position="87"/>
    </location>
</feature>
<gene>
    <name type="primary">pou6f1</name>
    <name type="synonym">pou[c]</name>
    <name type="synonym">pouc</name>
</gene>
<reference key="1">
    <citation type="journal article" date="1993" name="Nucleic Acids Res.">
        <title>Zebrafish pou[c]: a divergent POU family gene ubiquitously expressed during embryogenesis.</title>
        <authorList>
            <person name="Johansen T."/>
            <person name="Moens U."/>
            <person name="Holm T."/>
            <person name="Fjose A."/>
            <person name="Krauss S."/>
        </authorList>
    </citation>
    <scope>NUCLEOTIDE SEQUENCE [MRNA]</scope>
    <scope>FUNCTION</scope>
    <scope>TISSUE SPECIFICITY</scope>
    <source>
        <strain>NC-1</strain>
        <tissue>Embryonic liver</tissue>
    </source>
</reference>
<reference key="2">
    <citation type="submission" date="2008-04" db="EMBL/GenBank/DDBJ databases">
        <authorList>
            <consortium name="NIH - Zebrafish Gene Collection (ZGC) project"/>
        </authorList>
    </citation>
    <scope>NUCLEOTIDE SEQUENCE [LARGE SCALE MRNA]</scope>
</reference>
<proteinExistence type="evidence at transcript level"/>
<comment type="function">
    <text evidence="4">Transcription factor that binds with high affinity to the motif 5'-TAATGARAT-3'.</text>
</comment>
<comment type="subcellular location">
    <subcellularLocation>
        <location evidence="5">Nucleus</location>
    </subcellularLocation>
</comment>
<comment type="tissue specificity">
    <text evidence="4">Ubiquitously expressed during embryogenesis.</text>
</comment>
<comment type="similarity">
    <text evidence="5">Belongs to the POU transcription factor family. Class-6 subfamily.</text>
</comment>
<dbReference type="EMBL" id="X68432">
    <property type="protein sequence ID" value="CAA48481.1"/>
    <property type="molecule type" value="mRNA"/>
</dbReference>
<dbReference type="EMBL" id="BC162134">
    <property type="protein sequence ID" value="AAI62134.1"/>
    <property type="molecule type" value="mRNA"/>
</dbReference>
<dbReference type="EMBL" id="BC162146">
    <property type="protein sequence ID" value="AAI62146.1"/>
    <property type="molecule type" value="mRNA"/>
</dbReference>
<dbReference type="PIR" id="S30234">
    <property type="entry name" value="S30234"/>
</dbReference>
<dbReference type="RefSeq" id="NP_571188.1">
    <property type="nucleotide sequence ID" value="NM_131113.1"/>
</dbReference>
<dbReference type="SMR" id="P31367"/>
<dbReference type="FunCoup" id="P31367">
    <property type="interactions" value="440"/>
</dbReference>
<dbReference type="STRING" id="7955.ENSDARP00000111302"/>
<dbReference type="PaxDb" id="7955-ENSDARP00000111302"/>
<dbReference type="Ensembl" id="ENSDART00000130338">
    <property type="protein sequence ID" value="ENSDARP00000111302"/>
    <property type="gene ID" value="ENSDARG00000011570"/>
</dbReference>
<dbReference type="GeneID" id="30334"/>
<dbReference type="KEGG" id="dre:30334"/>
<dbReference type="AGR" id="ZFIN:ZDB-GENE-980526-530"/>
<dbReference type="CTD" id="5463"/>
<dbReference type="ZFIN" id="ZDB-GENE-980526-530">
    <property type="gene designation" value="pou6f1"/>
</dbReference>
<dbReference type="eggNOG" id="KOG3802">
    <property type="taxonomic scope" value="Eukaryota"/>
</dbReference>
<dbReference type="HOGENOM" id="CLU_013065_6_3_1"/>
<dbReference type="InParanoid" id="P31367"/>
<dbReference type="OMA" id="SEMQPIQ"/>
<dbReference type="OrthoDB" id="10066259at2759"/>
<dbReference type="PhylomeDB" id="P31367"/>
<dbReference type="TreeFam" id="TF350705"/>
<dbReference type="PRO" id="PR:P31367"/>
<dbReference type="Proteomes" id="UP000000437">
    <property type="component" value="Chromosome 23"/>
</dbReference>
<dbReference type="Bgee" id="ENSDARG00000011570">
    <property type="expression patterns" value="Expressed in mature ovarian follicle and 25 other cell types or tissues"/>
</dbReference>
<dbReference type="ExpressionAtlas" id="P31367">
    <property type="expression patterns" value="baseline"/>
</dbReference>
<dbReference type="GO" id="GO:0005634">
    <property type="term" value="C:nucleus"/>
    <property type="evidence" value="ECO:0007669"/>
    <property type="project" value="UniProtKB-SubCell"/>
</dbReference>
<dbReference type="GO" id="GO:0000981">
    <property type="term" value="F:DNA-binding transcription factor activity, RNA polymerase II-specific"/>
    <property type="evidence" value="ECO:0000318"/>
    <property type="project" value="GO_Central"/>
</dbReference>
<dbReference type="GO" id="GO:0000978">
    <property type="term" value="F:RNA polymerase II cis-regulatory region sequence-specific DNA binding"/>
    <property type="evidence" value="ECO:0000318"/>
    <property type="project" value="GO_Central"/>
</dbReference>
<dbReference type="GO" id="GO:1905222">
    <property type="term" value="P:atrioventricular canal morphogenesis"/>
    <property type="evidence" value="ECO:0000315"/>
    <property type="project" value="ZFIN"/>
</dbReference>
<dbReference type="GO" id="GO:0006357">
    <property type="term" value="P:regulation of transcription by RNA polymerase II"/>
    <property type="evidence" value="ECO:0000318"/>
    <property type="project" value="GO_Central"/>
</dbReference>
<dbReference type="CDD" id="cd00086">
    <property type="entry name" value="homeodomain"/>
    <property type="match status" value="1"/>
</dbReference>
<dbReference type="FunFam" id="1.10.10.60:FF:000051">
    <property type="entry name" value="POU domain protein"/>
    <property type="match status" value="1"/>
</dbReference>
<dbReference type="FunFam" id="1.10.260.40:FF:000013">
    <property type="entry name" value="POU domain protein"/>
    <property type="match status" value="1"/>
</dbReference>
<dbReference type="Gene3D" id="1.10.10.60">
    <property type="entry name" value="Homeodomain-like"/>
    <property type="match status" value="1"/>
</dbReference>
<dbReference type="Gene3D" id="1.10.260.40">
    <property type="entry name" value="lambda repressor-like DNA-binding domains"/>
    <property type="match status" value="1"/>
</dbReference>
<dbReference type="InterPro" id="IPR001356">
    <property type="entry name" value="HD"/>
</dbReference>
<dbReference type="InterPro" id="IPR009057">
    <property type="entry name" value="Homeodomain-like_sf"/>
</dbReference>
<dbReference type="InterPro" id="IPR010982">
    <property type="entry name" value="Lambda_DNA-bd_dom_sf"/>
</dbReference>
<dbReference type="InterPro" id="IPR013847">
    <property type="entry name" value="POU"/>
</dbReference>
<dbReference type="InterPro" id="IPR000327">
    <property type="entry name" value="POU_dom"/>
</dbReference>
<dbReference type="InterPro" id="IPR050255">
    <property type="entry name" value="POU_domain_TF"/>
</dbReference>
<dbReference type="PANTHER" id="PTHR11636">
    <property type="entry name" value="POU DOMAIN"/>
    <property type="match status" value="1"/>
</dbReference>
<dbReference type="PANTHER" id="PTHR11636:SF6">
    <property type="entry name" value="POU DOMAIN, CLASS 6, TRANSCRIPTION FACTOR 1"/>
    <property type="match status" value="1"/>
</dbReference>
<dbReference type="Pfam" id="PF00046">
    <property type="entry name" value="Homeodomain"/>
    <property type="match status" value="1"/>
</dbReference>
<dbReference type="Pfam" id="PF00157">
    <property type="entry name" value="Pou"/>
    <property type="match status" value="1"/>
</dbReference>
<dbReference type="PRINTS" id="PR00028">
    <property type="entry name" value="POUDOMAIN"/>
</dbReference>
<dbReference type="SMART" id="SM00389">
    <property type="entry name" value="HOX"/>
    <property type="match status" value="1"/>
</dbReference>
<dbReference type="SMART" id="SM00352">
    <property type="entry name" value="POU"/>
    <property type="match status" value="1"/>
</dbReference>
<dbReference type="SUPFAM" id="SSF46689">
    <property type="entry name" value="Homeodomain-like"/>
    <property type="match status" value="1"/>
</dbReference>
<dbReference type="SUPFAM" id="SSF47413">
    <property type="entry name" value="lambda repressor-like DNA-binding domains"/>
    <property type="match status" value="1"/>
</dbReference>
<dbReference type="PROSITE" id="PS50071">
    <property type="entry name" value="HOMEOBOX_2"/>
    <property type="match status" value="1"/>
</dbReference>
<dbReference type="PROSITE" id="PS00035">
    <property type="entry name" value="POU_1"/>
    <property type="match status" value="1"/>
</dbReference>
<dbReference type="PROSITE" id="PS00465">
    <property type="entry name" value="POU_2"/>
    <property type="match status" value="1"/>
</dbReference>
<dbReference type="PROSITE" id="PS51179">
    <property type="entry name" value="POU_3"/>
    <property type="match status" value="1"/>
</dbReference>
<organism>
    <name type="scientific">Danio rerio</name>
    <name type="common">Zebrafish</name>
    <name type="synonym">Brachydanio rerio</name>
    <dbReference type="NCBI Taxonomy" id="7955"/>
    <lineage>
        <taxon>Eukaryota</taxon>
        <taxon>Metazoa</taxon>
        <taxon>Chordata</taxon>
        <taxon>Craniata</taxon>
        <taxon>Vertebrata</taxon>
        <taxon>Euteleostomi</taxon>
        <taxon>Actinopterygii</taxon>
        <taxon>Neopterygii</taxon>
        <taxon>Teleostei</taxon>
        <taxon>Ostariophysi</taxon>
        <taxon>Cypriniformes</taxon>
        <taxon>Danionidae</taxon>
        <taxon>Danioninae</taxon>
        <taxon>Danio</taxon>
    </lineage>
</organism>
<name>PO6F1_DANRE</name>